<evidence type="ECO:0000250" key="1">
    <source>
        <dbReference type="UniProtKB" id="Q936X2"/>
    </source>
</evidence>
<evidence type="ECO:0000269" key="2">
    <source>
    </source>
</evidence>
<evidence type="ECO:0000303" key="3">
    <source>
    </source>
</evidence>
<evidence type="ECO:0000305" key="4"/>
<evidence type="ECO:0000305" key="5">
    <source>
    </source>
</evidence>
<evidence type="ECO:0000312" key="6">
    <source>
        <dbReference type="EMBL" id="BAF13970.1"/>
    </source>
</evidence>
<evidence type="ECO:0000312" key="7">
    <source>
        <dbReference type="EMBL" id="CAE01284.1"/>
    </source>
</evidence>
<organism>
    <name type="scientific">Oryza sativa subsp. japonica</name>
    <name type="common">Rice</name>
    <dbReference type="NCBI Taxonomy" id="39947"/>
    <lineage>
        <taxon>Eukaryota</taxon>
        <taxon>Viridiplantae</taxon>
        <taxon>Streptophyta</taxon>
        <taxon>Embryophyta</taxon>
        <taxon>Tracheophyta</taxon>
        <taxon>Spermatophyta</taxon>
        <taxon>Magnoliopsida</taxon>
        <taxon>Liliopsida</taxon>
        <taxon>Poales</taxon>
        <taxon>Poaceae</taxon>
        <taxon>BOP clade</taxon>
        <taxon>Oryzoideae</taxon>
        <taxon>Oryzeae</taxon>
        <taxon>Oryzinae</taxon>
        <taxon>Oryza</taxon>
        <taxon>Oryza sativa</taxon>
    </lineage>
</organism>
<reference key="1">
    <citation type="journal article" date="2002" name="Nature">
        <title>Sequence and analysis of rice chromosome 4.</title>
        <authorList>
            <person name="Feng Q."/>
            <person name="Zhang Y."/>
            <person name="Hao P."/>
            <person name="Wang S."/>
            <person name="Fu G."/>
            <person name="Huang Y."/>
            <person name="Li Y."/>
            <person name="Zhu J."/>
            <person name="Liu Y."/>
            <person name="Hu X."/>
            <person name="Jia P."/>
            <person name="Zhang Y."/>
            <person name="Zhao Q."/>
            <person name="Ying K."/>
            <person name="Yu S."/>
            <person name="Tang Y."/>
            <person name="Weng Q."/>
            <person name="Zhang L."/>
            <person name="Lu Y."/>
            <person name="Mu J."/>
            <person name="Lu Y."/>
            <person name="Zhang L.S."/>
            <person name="Yu Z."/>
            <person name="Fan D."/>
            <person name="Liu X."/>
            <person name="Lu T."/>
            <person name="Li C."/>
            <person name="Wu Y."/>
            <person name="Sun T."/>
            <person name="Lei H."/>
            <person name="Li T."/>
            <person name="Hu H."/>
            <person name="Guan J."/>
            <person name="Wu M."/>
            <person name="Zhang R."/>
            <person name="Zhou B."/>
            <person name="Chen Z."/>
            <person name="Chen L."/>
            <person name="Jin Z."/>
            <person name="Wang R."/>
            <person name="Yin H."/>
            <person name="Cai Z."/>
            <person name="Ren S."/>
            <person name="Lv G."/>
            <person name="Gu W."/>
            <person name="Zhu G."/>
            <person name="Tu Y."/>
            <person name="Jia J."/>
            <person name="Zhang Y."/>
            <person name="Chen J."/>
            <person name="Kang H."/>
            <person name="Chen X."/>
            <person name="Shao C."/>
            <person name="Sun Y."/>
            <person name="Hu Q."/>
            <person name="Zhang X."/>
            <person name="Zhang W."/>
            <person name="Wang L."/>
            <person name="Ding C."/>
            <person name="Sheng H."/>
            <person name="Gu J."/>
            <person name="Chen S."/>
            <person name="Ni L."/>
            <person name="Zhu F."/>
            <person name="Chen W."/>
            <person name="Lan L."/>
            <person name="Lai Y."/>
            <person name="Cheng Z."/>
            <person name="Gu M."/>
            <person name="Jiang J."/>
            <person name="Li J."/>
            <person name="Hong G."/>
            <person name="Xue Y."/>
            <person name="Han B."/>
        </authorList>
    </citation>
    <scope>NUCLEOTIDE SEQUENCE [LARGE SCALE GENOMIC DNA]</scope>
    <source>
        <strain>cv. Nipponbare</strain>
    </source>
</reference>
<reference key="2">
    <citation type="journal article" date="2005" name="Nature">
        <title>The map-based sequence of the rice genome.</title>
        <authorList>
            <consortium name="International rice genome sequencing project (IRGSP)"/>
        </authorList>
    </citation>
    <scope>NUCLEOTIDE SEQUENCE [LARGE SCALE GENOMIC DNA]</scope>
    <source>
        <strain>cv. Nipponbare</strain>
    </source>
</reference>
<reference key="3">
    <citation type="journal article" date="2008" name="Nucleic Acids Res.">
        <title>The rice annotation project database (RAP-DB): 2008 update.</title>
        <authorList>
            <consortium name="The rice annotation project (RAP)"/>
        </authorList>
    </citation>
    <scope>GENOME REANNOTATION</scope>
    <source>
        <strain>cv. Nipponbare</strain>
    </source>
</reference>
<reference key="4">
    <citation type="journal article" date="2013" name="Rice">
        <title>Improvement of the Oryza sativa Nipponbare reference genome using next generation sequence and optical map data.</title>
        <authorList>
            <person name="Kawahara Y."/>
            <person name="de la Bastide M."/>
            <person name="Hamilton J.P."/>
            <person name="Kanamori H."/>
            <person name="McCombie W.R."/>
            <person name="Ouyang S."/>
            <person name="Schwartz D.C."/>
            <person name="Tanaka T."/>
            <person name="Wu J."/>
            <person name="Zhou S."/>
            <person name="Childs K.L."/>
            <person name="Davidson R.M."/>
            <person name="Lin H."/>
            <person name="Quesada-Ocampo L."/>
            <person name="Vaillancourt B."/>
            <person name="Sakai H."/>
            <person name="Lee S.S."/>
            <person name="Kim J."/>
            <person name="Numa H."/>
            <person name="Itoh T."/>
            <person name="Buell C.R."/>
            <person name="Matsumoto T."/>
        </authorList>
    </citation>
    <scope>GENOME REANNOTATION</scope>
    <source>
        <strain>cv. Nipponbare</strain>
    </source>
</reference>
<reference key="5">
    <citation type="journal article" date="2014" name="Plants (Basel)">
        <title>Characterization of four bifunctional plant IAM/PAM-amidohydrolases capable of contributing to auxin biosynthesis.</title>
        <authorList>
            <person name="Sanchez-Parra B."/>
            <person name="Frerigmann H."/>
            <person name="Alonso M.M."/>
            <person name="Loba V.C."/>
            <person name="Jost R."/>
            <person name="Hentrich M."/>
            <person name="Pollmann S."/>
        </authorList>
    </citation>
    <scope>FUNCTION</scope>
    <scope>CATALYTIC ACTIVITY</scope>
    <scope>BIOPHYSICOCHEMICAL PROPERTIES</scope>
    <scope>SUBCELLULAR LOCATION</scope>
</reference>
<proteinExistence type="evidence at protein level"/>
<dbReference type="EC" id="3.5.1.4" evidence="2"/>
<dbReference type="EMBL" id="AL606450">
    <property type="protein sequence ID" value="CAE01284.1"/>
    <property type="molecule type" value="Genomic_DNA"/>
</dbReference>
<dbReference type="EMBL" id="AP008210">
    <property type="protein sequence ID" value="BAF13970.1"/>
    <property type="molecule type" value="Genomic_DNA"/>
</dbReference>
<dbReference type="EMBL" id="AP014960">
    <property type="protein sequence ID" value="BAS87628.1"/>
    <property type="molecule type" value="Genomic_DNA"/>
</dbReference>
<dbReference type="SMR" id="Q7XTK3"/>
<dbReference type="FunCoup" id="Q7XTK3">
    <property type="interactions" value="403"/>
</dbReference>
<dbReference type="STRING" id="39947.Q7XTK3"/>
<dbReference type="PaxDb" id="39947-Q7XTK3"/>
<dbReference type="EnsemblPlants" id="Os04t0118100-01">
    <property type="protein sequence ID" value="Os04t0118100-01"/>
    <property type="gene ID" value="Os04g0118100"/>
</dbReference>
<dbReference type="Gramene" id="Os04t0118100-01">
    <property type="protein sequence ID" value="Os04t0118100-01"/>
    <property type="gene ID" value="Os04g0118100"/>
</dbReference>
<dbReference type="KEGG" id="dosa:Os04g0118100"/>
<dbReference type="KEGG" id="osa:4334958"/>
<dbReference type="eggNOG" id="KOG1211">
    <property type="taxonomic scope" value="Eukaryota"/>
</dbReference>
<dbReference type="HOGENOM" id="CLU_009600_17_0_1"/>
<dbReference type="InParanoid" id="Q7XTK3"/>
<dbReference type="OMA" id="WGLRTTH"/>
<dbReference type="OrthoDB" id="245563at2759"/>
<dbReference type="PlantReactome" id="R-OSA-1119388">
    <property type="pathway name" value="IAA biosynthesis VI (via indole-3-acetamide)"/>
</dbReference>
<dbReference type="Proteomes" id="UP000000763">
    <property type="component" value="Chromosome 4"/>
</dbReference>
<dbReference type="Proteomes" id="UP000059680">
    <property type="component" value="Chromosome 4"/>
</dbReference>
<dbReference type="GO" id="GO:0005737">
    <property type="term" value="C:cytoplasm"/>
    <property type="evidence" value="ECO:0000314"/>
    <property type="project" value="UniProtKB"/>
</dbReference>
<dbReference type="GO" id="GO:0005654">
    <property type="term" value="C:nucleoplasm"/>
    <property type="evidence" value="ECO:0000314"/>
    <property type="project" value="UniProtKB"/>
</dbReference>
<dbReference type="GO" id="GO:0004040">
    <property type="term" value="F:amidase activity"/>
    <property type="evidence" value="ECO:0000314"/>
    <property type="project" value="UniProtKB"/>
</dbReference>
<dbReference type="GO" id="GO:0009851">
    <property type="term" value="P:auxin biosynthetic process"/>
    <property type="evidence" value="ECO:0007669"/>
    <property type="project" value="UniProtKB-KW"/>
</dbReference>
<dbReference type="FunFam" id="3.90.1300.10:FF:000004">
    <property type="entry name" value="Outer envelope protein 64, mitochondrial"/>
    <property type="match status" value="1"/>
</dbReference>
<dbReference type="Gene3D" id="3.90.1300.10">
    <property type="entry name" value="Amidase signature (AS) domain"/>
    <property type="match status" value="1"/>
</dbReference>
<dbReference type="InterPro" id="IPR020556">
    <property type="entry name" value="Amidase_CS"/>
</dbReference>
<dbReference type="InterPro" id="IPR023631">
    <property type="entry name" value="Amidase_dom"/>
</dbReference>
<dbReference type="InterPro" id="IPR036928">
    <property type="entry name" value="AS_sf"/>
</dbReference>
<dbReference type="PANTHER" id="PTHR46310">
    <property type="entry name" value="AMIDASE 1"/>
    <property type="match status" value="1"/>
</dbReference>
<dbReference type="PANTHER" id="PTHR46310:SF7">
    <property type="entry name" value="AMIDASE 1"/>
    <property type="match status" value="1"/>
</dbReference>
<dbReference type="Pfam" id="PF01425">
    <property type="entry name" value="Amidase"/>
    <property type="match status" value="1"/>
</dbReference>
<dbReference type="SUPFAM" id="SSF75304">
    <property type="entry name" value="Amidase signature (AS) enzymes"/>
    <property type="match status" value="1"/>
</dbReference>
<dbReference type="PROSITE" id="PS00571">
    <property type="entry name" value="AMIDASES"/>
    <property type="match status" value="1"/>
</dbReference>
<protein>
    <recommendedName>
        <fullName evidence="3">Amidase 1</fullName>
        <shortName evidence="3">OsAMI1</shortName>
        <ecNumber evidence="2">3.5.1.4</ecNumber>
    </recommendedName>
</protein>
<comment type="function">
    <text evidence="2 5">Amidase involved in auxin biosynthesis (Probable). Converts indole-3-acetamide (IAM) to indole-3-acetate, and phenyl-2-acetamide (PAM) to phenyl-2-acetate. Substrate preference is PAM &gt; IAM (PubMed:27135507).</text>
</comment>
<comment type="catalytic activity">
    <reaction evidence="2">
        <text>a monocarboxylic acid amide + H2O = a monocarboxylate + NH4(+)</text>
        <dbReference type="Rhea" id="RHEA:12020"/>
        <dbReference type="ChEBI" id="CHEBI:15377"/>
        <dbReference type="ChEBI" id="CHEBI:28938"/>
        <dbReference type="ChEBI" id="CHEBI:35757"/>
        <dbReference type="ChEBI" id="CHEBI:83628"/>
        <dbReference type="EC" id="3.5.1.4"/>
    </reaction>
</comment>
<comment type="biophysicochemical properties">
    <kinetics>
        <Vmax evidence="2">375.0 pmol/sec/mg enzyme with indole-3-acetamide as substrate</Vmax>
    </kinetics>
    <phDependence>
        <text evidence="2">Optimum pH is 7.5.</text>
    </phDependence>
    <temperatureDependence>
        <text evidence="2">Optimum temperature is 27 degrees Celsius.</text>
    </temperatureDependence>
</comment>
<comment type="subcellular location">
    <subcellularLocation>
        <location evidence="2">Cytoplasm</location>
    </subcellularLocation>
    <subcellularLocation>
        <location evidence="2">Nucleus</location>
        <location evidence="2">Nucleoplasm</location>
    </subcellularLocation>
</comment>
<comment type="similarity">
    <text evidence="4">Belongs to the amidase family.</text>
</comment>
<accession>Q7XTK3</accession>
<sequence length="435" mass="46180">MAMAGGGRGDYGAFMERFVLPPPPSQQLPLHGLTFAIKDIFDIAGRVTGFGNPDWARTHAPAAATSPVVLAALAAGATSLGTTIMDEMAYSINGENTHYGTPTNPCAPGRVPGGSSSGSAVAVAANLVDFSLGTDTGGSVRVPAAYCGIFGLRPSHGLVSAENVIPMAQMFDTVGWFSRDLSTLSRVTKVLLPLPDDIVKQPTQVTIPMDCFQILGSLDDRTYQIINASVAKRFDSQILDNRNLGDFISDNVPSIGKFITDFSESELPSVPALSVISHVMRGLQRSQFKANHAEWVNTVKPNLGPGLRERILEAIASGDNESLEDFQAIRAEFKSALAALLKDHGILAIPTVPGPPPKVGMEAAPLENFRARAFSLLSIAGLSGFCQVSIPLGMRNGLPVSVSLVARHGADHFLLNVVEELYQTLIDEATKTWSS</sequence>
<feature type="chain" id="PRO_0000442780" description="Amidase 1">
    <location>
        <begin position="1"/>
        <end position="435"/>
    </location>
</feature>
<feature type="active site" description="Charge relay system" evidence="1">
    <location>
        <position position="38"/>
    </location>
</feature>
<feature type="active site" description="Charge relay system" evidence="1">
    <location>
        <position position="115"/>
    </location>
</feature>
<feature type="active site" description="Acyl-ester intermediate" evidence="1">
    <location>
        <position position="139"/>
    </location>
</feature>
<gene>
    <name evidence="3" type="primary">AMI1</name>
    <name evidence="6" type="ordered locus">Os04g0118100</name>
    <name evidence="4" type="ordered locus">LOC_Os04g02780</name>
    <name evidence="7" type="ORF">OSJNBa0020P07.1</name>
</gene>
<keyword id="KW-0073">Auxin biosynthesis</keyword>
<keyword id="KW-0963">Cytoplasm</keyword>
<keyword id="KW-0378">Hydrolase</keyword>
<keyword id="KW-0539">Nucleus</keyword>
<keyword id="KW-1185">Reference proteome</keyword>
<name>AMI1_ORYSJ</name>